<feature type="chain" id="PRO_0000434706" description="AAA-ATPase At2g46620">
    <location>
        <begin position="1"/>
        <end position="491"/>
    </location>
</feature>
<feature type="transmembrane region" description="Helical" evidence="2">
    <location>
        <begin position="1"/>
        <end position="21"/>
    </location>
</feature>
<feature type="region of interest" description="Disordered" evidence="3">
    <location>
        <begin position="423"/>
        <end position="460"/>
    </location>
</feature>
<feature type="binding site" evidence="2">
    <location>
        <begin position="238"/>
        <end position="245"/>
    </location>
    <ligand>
        <name>ATP</name>
        <dbReference type="ChEBI" id="CHEBI:30616"/>
    </ligand>
</feature>
<evidence type="ECO:0000250" key="1">
    <source>
        <dbReference type="UniProtKB" id="Q9FLD5"/>
    </source>
</evidence>
<evidence type="ECO:0000255" key="2"/>
<evidence type="ECO:0000256" key="3">
    <source>
        <dbReference type="SAM" id="MobiDB-lite"/>
    </source>
</evidence>
<evidence type="ECO:0000305" key="4"/>
<evidence type="ECO:0000312" key="5">
    <source>
        <dbReference type="EMBL" id="AAD20172.1"/>
    </source>
</evidence>
<evidence type="ECO:0000312" key="6">
    <source>
        <dbReference type="EMBL" id="AEC10730.1"/>
    </source>
</evidence>
<evidence type="ECO:0000312" key="7">
    <source>
        <dbReference type="Proteomes" id="UP000006548"/>
    </source>
</evidence>
<name>AATP4_ARATH</name>
<dbReference type="EC" id="3.6.1.-" evidence="1"/>
<dbReference type="EMBL" id="AC006418">
    <property type="protein sequence ID" value="AAD20172.1"/>
    <property type="molecule type" value="Genomic_DNA"/>
</dbReference>
<dbReference type="EMBL" id="CP002685">
    <property type="protein sequence ID" value="AEC10730.1"/>
    <property type="molecule type" value="Genomic_DNA"/>
</dbReference>
<dbReference type="EMBL" id="AY075646">
    <property type="protein sequence ID" value="AAL77654.1"/>
    <property type="status" value="ALT_INIT"/>
    <property type="molecule type" value="mRNA"/>
</dbReference>
<dbReference type="EMBL" id="AY143966">
    <property type="protein sequence ID" value="AAN28905.1"/>
    <property type="molecule type" value="mRNA"/>
</dbReference>
<dbReference type="PIR" id="B84905">
    <property type="entry name" value="B84905"/>
</dbReference>
<dbReference type="RefSeq" id="NP_182185.2">
    <property type="nucleotide sequence ID" value="NM_130227.4"/>
</dbReference>
<dbReference type="SMR" id="F4IJ77"/>
<dbReference type="FunCoup" id="F4IJ77">
    <property type="interactions" value="1901"/>
</dbReference>
<dbReference type="STRING" id="3702.F4IJ77"/>
<dbReference type="iPTMnet" id="F4IJ77"/>
<dbReference type="PaxDb" id="3702-AT2G46620.1"/>
<dbReference type="ProteomicsDB" id="244621"/>
<dbReference type="EnsemblPlants" id="AT2G46620.1">
    <property type="protein sequence ID" value="AT2G46620.1"/>
    <property type="gene ID" value="AT2G46620"/>
</dbReference>
<dbReference type="GeneID" id="819274"/>
<dbReference type="Gramene" id="AT2G46620.1">
    <property type="protein sequence ID" value="AT2G46620.1"/>
    <property type="gene ID" value="AT2G46620"/>
</dbReference>
<dbReference type="KEGG" id="ath:AT2G46620"/>
<dbReference type="Araport" id="AT2G46620"/>
<dbReference type="TAIR" id="AT2G46620"/>
<dbReference type="eggNOG" id="KOG0743">
    <property type="taxonomic scope" value="Eukaryota"/>
</dbReference>
<dbReference type="HOGENOM" id="CLU_010189_0_4_1"/>
<dbReference type="InParanoid" id="F4IJ77"/>
<dbReference type="OMA" id="YAVRRLW"/>
<dbReference type="OrthoDB" id="10251412at2759"/>
<dbReference type="PRO" id="PR:F4IJ77"/>
<dbReference type="Proteomes" id="UP000006548">
    <property type="component" value="Chromosome 2"/>
</dbReference>
<dbReference type="ExpressionAtlas" id="F4IJ77">
    <property type="expression patterns" value="baseline and differential"/>
</dbReference>
<dbReference type="GO" id="GO:0016020">
    <property type="term" value="C:membrane"/>
    <property type="evidence" value="ECO:0007669"/>
    <property type="project" value="UniProtKB-SubCell"/>
</dbReference>
<dbReference type="GO" id="GO:0005524">
    <property type="term" value="F:ATP binding"/>
    <property type="evidence" value="ECO:0007669"/>
    <property type="project" value="UniProtKB-KW"/>
</dbReference>
<dbReference type="GO" id="GO:0016887">
    <property type="term" value="F:ATP hydrolysis activity"/>
    <property type="evidence" value="ECO:0007669"/>
    <property type="project" value="InterPro"/>
</dbReference>
<dbReference type="GO" id="GO:0006950">
    <property type="term" value="P:response to stress"/>
    <property type="evidence" value="ECO:0007669"/>
    <property type="project" value="UniProtKB-ARBA"/>
</dbReference>
<dbReference type="CDD" id="cd19510">
    <property type="entry name" value="RecA-like_BCS1"/>
    <property type="match status" value="1"/>
</dbReference>
<dbReference type="Gene3D" id="6.10.280.40">
    <property type="match status" value="1"/>
</dbReference>
<dbReference type="Gene3D" id="3.40.50.300">
    <property type="entry name" value="P-loop containing nucleotide triphosphate hydrolases"/>
    <property type="match status" value="1"/>
</dbReference>
<dbReference type="InterPro" id="IPR003593">
    <property type="entry name" value="AAA+_ATPase"/>
</dbReference>
<dbReference type="InterPro" id="IPR025753">
    <property type="entry name" value="AAA_N_dom"/>
</dbReference>
<dbReference type="InterPro" id="IPR003959">
    <property type="entry name" value="ATPase_AAA_core"/>
</dbReference>
<dbReference type="InterPro" id="IPR050747">
    <property type="entry name" value="Mitochondrial_chaperone_BCS1"/>
</dbReference>
<dbReference type="InterPro" id="IPR027417">
    <property type="entry name" value="P-loop_NTPase"/>
</dbReference>
<dbReference type="PANTHER" id="PTHR23070">
    <property type="entry name" value="BCS1 AAA-TYPE ATPASE"/>
    <property type="match status" value="1"/>
</dbReference>
<dbReference type="Pfam" id="PF00004">
    <property type="entry name" value="AAA"/>
    <property type="match status" value="1"/>
</dbReference>
<dbReference type="Pfam" id="PF14363">
    <property type="entry name" value="AAA_assoc"/>
    <property type="match status" value="1"/>
</dbReference>
<dbReference type="SMART" id="SM00382">
    <property type="entry name" value="AAA"/>
    <property type="match status" value="1"/>
</dbReference>
<dbReference type="SUPFAM" id="SSF52540">
    <property type="entry name" value="P-loop containing nucleoside triphosphate hydrolases"/>
    <property type="match status" value="1"/>
</dbReference>
<protein>
    <recommendedName>
        <fullName>AAA-ATPase At2g46620</fullName>
        <ecNumber evidence="1">3.6.1.-</ecNumber>
    </recommendedName>
</protein>
<proteinExistence type="evidence at transcript level"/>
<accession>F4IJ77</accession>
<accession>Q9ZPX7</accession>
<keyword id="KW-0067">ATP-binding</keyword>
<keyword id="KW-0378">Hydrolase</keyword>
<keyword id="KW-0460">Magnesium</keyword>
<keyword id="KW-0472">Membrane</keyword>
<keyword id="KW-0547">Nucleotide-binding</keyword>
<keyword id="KW-1185">Reference proteome</keyword>
<keyword id="KW-0812">Transmembrane</keyword>
<keyword id="KW-1133">Transmembrane helix</keyword>
<organism evidence="7">
    <name type="scientific">Arabidopsis thaliana</name>
    <name type="common">Mouse-ear cress</name>
    <dbReference type="NCBI Taxonomy" id="3702"/>
    <lineage>
        <taxon>Eukaryota</taxon>
        <taxon>Viridiplantae</taxon>
        <taxon>Streptophyta</taxon>
        <taxon>Embryophyta</taxon>
        <taxon>Tracheophyta</taxon>
        <taxon>Spermatophyta</taxon>
        <taxon>Magnoliopsida</taxon>
        <taxon>eudicotyledons</taxon>
        <taxon>Gunneridae</taxon>
        <taxon>Pentapetalae</taxon>
        <taxon>rosids</taxon>
        <taxon>malvids</taxon>
        <taxon>Brassicales</taxon>
        <taxon>Brassicaceae</taxon>
        <taxon>Camelineae</taxon>
        <taxon>Arabidopsis</taxon>
    </lineage>
</organism>
<gene>
    <name evidence="6" type="ordered locus">At2g46620</name>
    <name evidence="5" type="ORF">F13A10.15</name>
</gene>
<sequence length="491" mass="55910">MGILWDSFLLLLVSTFALFLVRILLFKTGLIYMVKLWRRKIIDWFHVYQFYKVPEFNDNVQENHLYQKVYMYLNSLSSIENSDFTNLFTGKKSNEIILRLDRNQVVGDEFLGARVCWINGEDEDGARNFVLKIRKADKRRILGSYLQHIHTVSDELEQRNTELKLFINVGIDDHLNKKKKKNGRWRSIPFDHPCTFDNIAMETDLKNKVKSDLESFLKGKQYYNRLGRVWKRSYLLYGPSGTGKSSFVAAMANFLDYDVYDIDLSKVVDDSDLKMLLLQTRGKSVIVIEDLDRHLSTKSTAVNLSGILNFTDSILSSCTADERIMVFTMTGKEQIDPAMLRPGRVDVHIHFPLCDFTAFKTLANNYLGVKEHKLFSQVEGIFQNGASLSPAEIGELMIANRNSPTRALKHVINALQTDGDRRGTGRRLLLENGSRKSTSEDVSDDMSGSLCGGGGGSSPAVKEFRKLYGLLRIKSSRKSGSFDVAREMRDG</sequence>
<comment type="catalytic activity">
    <reaction evidence="1">
        <text>ATP + H2O = ADP + phosphate + H(+)</text>
        <dbReference type="Rhea" id="RHEA:13065"/>
        <dbReference type="ChEBI" id="CHEBI:15377"/>
        <dbReference type="ChEBI" id="CHEBI:15378"/>
        <dbReference type="ChEBI" id="CHEBI:30616"/>
        <dbReference type="ChEBI" id="CHEBI:43474"/>
        <dbReference type="ChEBI" id="CHEBI:456216"/>
    </reaction>
</comment>
<comment type="cofactor">
    <cofactor evidence="1">
        <name>Mg(2+)</name>
        <dbReference type="ChEBI" id="CHEBI:18420"/>
    </cofactor>
</comment>
<comment type="subcellular location">
    <subcellularLocation>
        <location evidence="2">Membrane</location>
        <topology evidence="2">Single-pass membrane protein</topology>
    </subcellularLocation>
</comment>
<comment type="similarity">
    <text evidence="4">Belongs to the AAA ATPase family. BCS1 subfamily.</text>
</comment>
<comment type="sequence caution" evidence="4">
    <conflict type="erroneous initiation">
        <sequence resource="EMBL-CDS" id="AAL77654"/>
    </conflict>
    <text>Truncated N-terminus.</text>
</comment>
<reference key="1">
    <citation type="journal article" date="1999" name="Nature">
        <title>Sequence and analysis of chromosome 2 of the plant Arabidopsis thaliana.</title>
        <authorList>
            <person name="Lin X."/>
            <person name="Kaul S."/>
            <person name="Rounsley S.D."/>
            <person name="Shea T.P."/>
            <person name="Benito M.-I."/>
            <person name="Town C.D."/>
            <person name="Fujii C.Y."/>
            <person name="Mason T.M."/>
            <person name="Bowman C.L."/>
            <person name="Barnstead M.E."/>
            <person name="Feldblyum T.V."/>
            <person name="Buell C.R."/>
            <person name="Ketchum K.A."/>
            <person name="Lee J.J."/>
            <person name="Ronning C.M."/>
            <person name="Koo H.L."/>
            <person name="Moffat K.S."/>
            <person name="Cronin L.A."/>
            <person name="Shen M."/>
            <person name="Pai G."/>
            <person name="Van Aken S."/>
            <person name="Umayam L."/>
            <person name="Tallon L.J."/>
            <person name="Gill J.E."/>
            <person name="Adams M.D."/>
            <person name="Carrera A.J."/>
            <person name="Creasy T.H."/>
            <person name="Goodman H.M."/>
            <person name="Somerville C.R."/>
            <person name="Copenhaver G.P."/>
            <person name="Preuss D."/>
            <person name="Nierman W.C."/>
            <person name="White O."/>
            <person name="Eisen J.A."/>
            <person name="Salzberg S.L."/>
            <person name="Fraser C.M."/>
            <person name="Venter J.C."/>
        </authorList>
    </citation>
    <scope>NUCLEOTIDE SEQUENCE [LARGE SCALE GENOMIC DNA]</scope>
    <source>
        <strain>cv. Columbia</strain>
    </source>
</reference>
<reference key="2">
    <citation type="journal article" date="2017" name="Plant J.">
        <title>Araport11: a complete reannotation of the Arabidopsis thaliana reference genome.</title>
        <authorList>
            <person name="Cheng C.Y."/>
            <person name="Krishnakumar V."/>
            <person name="Chan A.P."/>
            <person name="Thibaud-Nissen F."/>
            <person name="Schobel S."/>
            <person name="Town C.D."/>
        </authorList>
    </citation>
    <scope>GENOME REANNOTATION</scope>
    <source>
        <strain>cv. Columbia</strain>
    </source>
</reference>
<reference key="3">
    <citation type="journal article" date="2003" name="Science">
        <title>Empirical analysis of transcriptional activity in the Arabidopsis genome.</title>
        <authorList>
            <person name="Yamada K."/>
            <person name="Lim J."/>
            <person name="Dale J.M."/>
            <person name="Chen H."/>
            <person name="Shinn P."/>
            <person name="Palm C.J."/>
            <person name="Southwick A.M."/>
            <person name="Wu H.C."/>
            <person name="Kim C.J."/>
            <person name="Nguyen M."/>
            <person name="Pham P.K."/>
            <person name="Cheuk R.F."/>
            <person name="Karlin-Newmann G."/>
            <person name="Liu S.X."/>
            <person name="Lam B."/>
            <person name="Sakano H."/>
            <person name="Wu T."/>
            <person name="Yu G."/>
            <person name="Miranda M."/>
            <person name="Quach H.L."/>
            <person name="Tripp M."/>
            <person name="Chang C.H."/>
            <person name="Lee J.M."/>
            <person name="Toriumi M.J."/>
            <person name="Chan M.M."/>
            <person name="Tang C.C."/>
            <person name="Onodera C.S."/>
            <person name="Deng J.M."/>
            <person name="Akiyama K."/>
            <person name="Ansari Y."/>
            <person name="Arakawa T."/>
            <person name="Banh J."/>
            <person name="Banno F."/>
            <person name="Bowser L."/>
            <person name="Brooks S.Y."/>
            <person name="Carninci P."/>
            <person name="Chao Q."/>
            <person name="Choy N."/>
            <person name="Enju A."/>
            <person name="Goldsmith A.D."/>
            <person name="Gurjal M."/>
            <person name="Hansen N.F."/>
            <person name="Hayashizaki Y."/>
            <person name="Johnson-Hopson C."/>
            <person name="Hsuan V.W."/>
            <person name="Iida K."/>
            <person name="Karnes M."/>
            <person name="Khan S."/>
            <person name="Koesema E."/>
            <person name="Ishida J."/>
            <person name="Jiang P.X."/>
            <person name="Jones T."/>
            <person name="Kawai J."/>
            <person name="Kamiya A."/>
            <person name="Meyers C."/>
            <person name="Nakajima M."/>
            <person name="Narusaka M."/>
            <person name="Seki M."/>
            <person name="Sakurai T."/>
            <person name="Satou M."/>
            <person name="Tamse R."/>
            <person name="Vaysberg M."/>
            <person name="Wallender E.K."/>
            <person name="Wong C."/>
            <person name="Yamamura Y."/>
            <person name="Yuan S."/>
            <person name="Shinozaki K."/>
            <person name="Davis R.W."/>
            <person name="Theologis A."/>
            <person name="Ecker J.R."/>
        </authorList>
    </citation>
    <scope>NUCLEOTIDE SEQUENCE [LARGE SCALE MRNA] OF 23-491</scope>
    <source>
        <strain>cv. Columbia</strain>
    </source>
</reference>